<gene>
    <name evidence="1" type="primary">ureE</name>
    <name type="ordered locus">YPTB2941</name>
</gene>
<name>UREE_YERPS</name>
<proteinExistence type="inferred from homology"/>
<dbReference type="EMBL" id="U40842">
    <property type="protein sequence ID" value="AAA87855.2"/>
    <property type="molecule type" value="Genomic_DNA"/>
</dbReference>
<dbReference type="EMBL" id="BX936398">
    <property type="protein sequence ID" value="CAH22179.1"/>
    <property type="molecule type" value="Genomic_DNA"/>
</dbReference>
<dbReference type="RefSeq" id="WP_011192844.1">
    <property type="nucleotide sequence ID" value="NC_006155.1"/>
</dbReference>
<dbReference type="SMR" id="P52317"/>
<dbReference type="GeneID" id="49785047"/>
<dbReference type="KEGG" id="ypo:BZ17_3687"/>
<dbReference type="KEGG" id="yps:YPTB2941"/>
<dbReference type="PATRIC" id="fig|273123.14.peg.3865"/>
<dbReference type="Proteomes" id="UP000001011">
    <property type="component" value="Chromosome"/>
</dbReference>
<dbReference type="GO" id="GO:0005737">
    <property type="term" value="C:cytoplasm"/>
    <property type="evidence" value="ECO:0007669"/>
    <property type="project" value="UniProtKB-SubCell"/>
</dbReference>
<dbReference type="GO" id="GO:0016151">
    <property type="term" value="F:nickel cation binding"/>
    <property type="evidence" value="ECO:0007669"/>
    <property type="project" value="UniProtKB-UniRule"/>
</dbReference>
<dbReference type="GO" id="GO:0051082">
    <property type="term" value="F:unfolded protein binding"/>
    <property type="evidence" value="ECO:0007669"/>
    <property type="project" value="UniProtKB-UniRule"/>
</dbReference>
<dbReference type="GO" id="GO:0006457">
    <property type="term" value="P:protein folding"/>
    <property type="evidence" value="ECO:0007669"/>
    <property type="project" value="InterPro"/>
</dbReference>
<dbReference type="CDD" id="cd00571">
    <property type="entry name" value="UreE"/>
    <property type="match status" value="1"/>
</dbReference>
<dbReference type="Gene3D" id="2.60.260.20">
    <property type="entry name" value="Urease metallochaperone UreE, N-terminal domain"/>
    <property type="match status" value="1"/>
</dbReference>
<dbReference type="HAMAP" id="MF_00822">
    <property type="entry name" value="UreE"/>
    <property type="match status" value="1"/>
</dbReference>
<dbReference type="InterPro" id="IPR012406">
    <property type="entry name" value="UreE"/>
</dbReference>
<dbReference type="InterPro" id="IPR004029">
    <property type="entry name" value="UreE_N"/>
</dbReference>
<dbReference type="InterPro" id="IPR036118">
    <property type="entry name" value="UreE_N_sf"/>
</dbReference>
<dbReference type="NCBIfam" id="NF009761">
    <property type="entry name" value="PRK13262.1"/>
    <property type="match status" value="1"/>
</dbReference>
<dbReference type="Pfam" id="PF02814">
    <property type="entry name" value="UreE_N"/>
    <property type="match status" value="1"/>
</dbReference>
<dbReference type="SMART" id="SM00988">
    <property type="entry name" value="UreE_N"/>
    <property type="match status" value="1"/>
</dbReference>
<dbReference type="SUPFAM" id="SSF69287">
    <property type="entry name" value="Urease metallochaperone UreE, N-terminal domain"/>
    <property type="match status" value="1"/>
</dbReference>
<protein>
    <recommendedName>
        <fullName evidence="1">Urease accessory protein UreE</fullName>
    </recommendedName>
</protein>
<comment type="function">
    <text evidence="1">Involved in urease metallocenter assembly. Binds nickel. Probably functions as a nickel donor during metallocenter assembly.</text>
</comment>
<comment type="subcellular location">
    <subcellularLocation>
        <location evidence="1">Cytoplasm</location>
    </subcellularLocation>
</comment>
<comment type="similarity">
    <text evidence="1">Belongs to the UreE family.</text>
</comment>
<organism>
    <name type="scientific">Yersinia pseudotuberculosis serotype I (strain IP32953)</name>
    <dbReference type="NCBI Taxonomy" id="273123"/>
    <lineage>
        <taxon>Bacteria</taxon>
        <taxon>Pseudomonadati</taxon>
        <taxon>Pseudomonadota</taxon>
        <taxon>Gammaproteobacteria</taxon>
        <taxon>Enterobacterales</taxon>
        <taxon>Yersiniaceae</taxon>
        <taxon>Yersinia</taxon>
    </lineage>
</organism>
<accession>P52317</accession>
<accession>Q667Q1</accession>
<reference key="1">
    <citation type="journal article" date="1997" name="Infect. Immun.">
        <title>Urease is not involved in the virulence of Yersinia pseudotuberculosis in mice.</title>
        <authorList>
            <person name="Riot B."/>
            <person name="Berche P."/>
            <person name="Simonet M."/>
        </authorList>
    </citation>
    <scope>NUCLEOTIDE SEQUENCE [GENOMIC DNA]</scope>
    <source>
        <strain>IP 2777</strain>
    </source>
</reference>
<reference key="2">
    <citation type="submission" date="1999-12" db="EMBL/GenBank/DDBJ databases">
        <authorList>
            <person name="Riot B."/>
        </authorList>
    </citation>
    <scope>SEQUENCE REVISION TO 17</scope>
</reference>
<reference key="3">
    <citation type="journal article" date="2004" name="Proc. Natl. Acad. Sci. U.S.A.">
        <title>Insights into the evolution of Yersinia pestis through whole-genome comparison with Yersinia pseudotuberculosis.</title>
        <authorList>
            <person name="Chain P.S.G."/>
            <person name="Carniel E."/>
            <person name="Larimer F.W."/>
            <person name="Lamerdin J."/>
            <person name="Stoutland P.O."/>
            <person name="Regala W.M."/>
            <person name="Georgescu A.M."/>
            <person name="Vergez L.M."/>
            <person name="Land M.L."/>
            <person name="Motin V.L."/>
            <person name="Brubaker R.R."/>
            <person name="Fowler J."/>
            <person name="Hinnebusch J."/>
            <person name="Marceau M."/>
            <person name="Medigue C."/>
            <person name="Simonet M."/>
            <person name="Chenal-Francisque V."/>
            <person name="Souza B."/>
            <person name="Dacheux D."/>
            <person name="Elliott J.M."/>
            <person name="Derbise A."/>
            <person name="Hauser L.J."/>
            <person name="Garcia E."/>
        </authorList>
    </citation>
    <scope>NUCLEOTIDE SEQUENCE [LARGE SCALE GENOMIC DNA]</scope>
    <source>
        <strain>IP32953</strain>
    </source>
</reference>
<sequence>MILIEHILGNVKKDPVWREKLKDATFDLLILDQREAQKSRCRKSSTQGLDLGISLDRNVVLADGDVLAWDEETNVAVVVQINLRDVMVIDLSELKSRSPDELIKTCFELGHALGNQHWKAVTKHNEVYVPLTVATTMMDSVMRTHGFQHLPFRFVKGAEILPLLTNSEARLLFGGAEDTDTHVHVASPLDEPHGSGLHIHGIHSHGEGHSHGDHDHDHSHSHGDHDHDHKH</sequence>
<keyword id="KW-0143">Chaperone</keyword>
<keyword id="KW-0963">Cytoplasm</keyword>
<keyword id="KW-0533">Nickel</keyword>
<keyword id="KW-0996">Nickel insertion</keyword>
<evidence type="ECO:0000255" key="1">
    <source>
        <dbReference type="HAMAP-Rule" id="MF_00822"/>
    </source>
</evidence>
<evidence type="ECO:0000256" key="2">
    <source>
        <dbReference type="SAM" id="MobiDB-lite"/>
    </source>
</evidence>
<feature type="chain" id="PRO_0000067642" description="Urease accessory protein UreE">
    <location>
        <begin position="1"/>
        <end position="231"/>
    </location>
</feature>
<feature type="region of interest" description="Disordered" evidence="2">
    <location>
        <begin position="185"/>
        <end position="231"/>
    </location>
</feature>
<feature type="compositionally biased region" description="Basic and acidic residues" evidence="2">
    <location>
        <begin position="204"/>
        <end position="231"/>
    </location>
</feature>